<dbReference type="EC" id="1.18.1.2" evidence="1"/>
<dbReference type="EMBL" id="AL646052">
    <property type="protein sequence ID" value="CAD14841.1"/>
    <property type="status" value="ALT_INIT"/>
    <property type="molecule type" value="Genomic_DNA"/>
</dbReference>
<dbReference type="RefSeq" id="WP_019717987.1">
    <property type="nucleotide sequence ID" value="NC_003295.1"/>
</dbReference>
<dbReference type="SMR" id="Q8Y0A5"/>
<dbReference type="STRING" id="267608.RSc1139"/>
<dbReference type="EnsemblBacteria" id="CAD14841">
    <property type="protein sequence ID" value="CAD14841"/>
    <property type="gene ID" value="RSc1139"/>
</dbReference>
<dbReference type="KEGG" id="rso:RSc1139"/>
<dbReference type="eggNOG" id="COG0492">
    <property type="taxonomic scope" value="Bacteria"/>
</dbReference>
<dbReference type="HOGENOM" id="CLU_031864_5_5_4"/>
<dbReference type="Proteomes" id="UP000001436">
    <property type="component" value="Chromosome"/>
</dbReference>
<dbReference type="GO" id="GO:0004324">
    <property type="term" value="F:ferredoxin-NADP+ reductase activity"/>
    <property type="evidence" value="ECO:0007669"/>
    <property type="project" value="UniProtKB-UniRule"/>
</dbReference>
<dbReference type="GO" id="GO:0050660">
    <property type="term" value="F:flavin adenine dinucleotide binding"/>
    <property type="evidence" value="ECO:0007669"/>
    <property type="project" value="UniProtKB-UniRule"/>
</dbReference>
<dbReference type="GO" id="GO:0050661">
    <property type="term" value="F:NADP binding"/>
    <property type="evidence" value="ECO:0007669"/>
    <property type="project" value="UniProtKB-UniRule"/>
</dbReference>
<dbReference type="Gene3D" id="3.50.50.60">
    <property type="entry name" value="FAD/NAD(P)-binding domain"/>
    <property type="match status" value="2"/>
</dbReference>
<dbReference type="HAMAP" id="MF_01685">
    <property type="entry name" value="FENR2"/>
    <property type="match status" value="1"/>
</dbReference>
<dbReference type="InterPro" id="IPR036188">
    <property type="entry name" value="FAD/NAD-bd_sf"/>
</dbReference>
<dbReference type="InterPro" id="IPR023753">
    <property type="entry name" value="FAD/NAD-binding_dom"/>
</dbReference>
<dbReference type="InterPro" id="IPR022890">
    <property type="entry name" value="Fd--NADP_Rdtase_type_2"/>
</dbReference>
<dbReference type="InterPro" id="IPR050097">
    <property type="entry name" value="Ferredoxin-NADP_redctase_2"/>
</dbReference>
<dbReference type="PANTHER" id="PTHR48105">
    <property type="entry name" value="THIOREDOXIN REDUCTASE 1-RELATED-RELATED"/>
    <property type="match status" value="1"/>
</dbReference>
<dbReference type="Pfam" id="PF07992">
    <property type="entry name" value="Pyr_redox_2"/>
    <property type="match status" value="1"/>
</dbReference>
<dbReference type="PRINTS" id="PR00368">
    <property type="entry name" value="FADPNR"/>
</dbReference>
<dbReference type="PRINTS" id="PR00469">
    <property type="entry name" value="PNDRDTASEII"/>
</dbReference>
<dbReference type="SUPFAM" id="SSF51905">
    <property type="entry name" value="FAD/NAD(P)-binding domain"/>
    <property type="match status" value="1"/>
</dbReference>
<proteinExistence type="inferred from homology"/>
<comment type="catalytic activity">
    <reaction evidence="1">
        <text>2 reduced [2Fe-2S]-[ferredoxin] + NADP(+) + H(+) = 2 oxidized [2Fe-2S]-[ferredoxin] + NADPH</text>
        <dbReference type="Rhea" id="RHEA:20125"/>
        <dbReference type="Rhea" id="RHEA-COMP:10000"/>
        <dbReference type="Rhea" id="RHEA-COMP:10001"/>
        <dbReference type="ChEBI" id="CHEBI:15378"/>
        <dbReference type="ChEBI" id="CHEBI:33737"/>
        <dbReference type="ChEBI" id="CHEBI:33738"/>
        <dbReference type="ChEBI" id="CHEBI:57783"/>
        <dbReference type="ChEBI" id="CHEBI:58349"/>
        <dbReference type="EC" id="1.18.1.2"/>
    </reaction>
</comment>
<comment type="cofactor">
    <cofactor evidence="1">
        <name>FAD</name>
        <dbReference type="ChEBI" id="CHEBI:57692"/>
    </cofactor>
    <text evidence="1">Binds 1 FAD per subunit.</text>
</comment>
<comment type="subunit">
    <text evidence="1">Homodimer.</text>
</comment>
<comment type="similarity">
    <text evidence="1">Belongs to the ferredoxin--NADP reductase type 2 family.</text>
</comment>
<comment type="sequence caution" evidence="3">
    <conflict type="erroneous initiation">
        <sequence resource="EMBL-CDS" id="CAD14841"/>
    </conflict>
</comment>
<organism>
    <name type="scientific">Ralstonia nicotianae (strain ATCC BAA-1114 / GMI1000)</name>
    <name type="common">Ralstonia solanacearum</name>
    <dbReference type="NCBI Taxonomy" id="267608"/>
    <lineage>
        <taxon>Bacteria</taxon>
        <taxon>Pseudomonadati</taxon>
        <taxon>Pseudomonadota</taxon>
        <taxon>Betaproteobacteria</taxon>
        <taxon>Burkholderiales</taxon>
        <taxon>Burkholderiaceae</taxon>
        <taxon>Ralstonia</taxon>
        <taxon>Ralstonia solanacearum species complex</taxon>
    </lineage>
</organism>
<protein>
    <recommendedName>
        <fullName evidence="1">Ferredoxin--NADP reductase</fullName>
        <shortName evidence="1">FNR</shortName>
        <shortName evidence="1">Fd-NADP(+) reductase</shortName>
        <ecNumber evidence="1">1.18.1.2</ecNumber>
    </recommendedName>
</protein>
<feature type="chain" id="PRO_0000364910" description="Ferredoxin--NADP reductase">
    <location>
        <begin position="1"/>
        <end position="359"/>
    </location>
</feature>
<feature type="region of interest" description="Disordered" evidence="2">
    <location>
        <begin position="340"/>
        <end position="359"/>
    </location>
</feature>
<feature type="compositionally biased region" description="Polar residues" evidence="2">
    <location>
        <begin position="341"/>
        <end position="352"/>
    </location>
</feature>
<feature type="binding site" evidence="1">
    <location>
        <position position="48"/>
    </location>
    <ligand>
        <name>FAD</name>
        <dbReference type="ChEBI" id="CHEBI:57692"/>
    </ligand>
</feature>
<feature type="binding site" evidence="1">
    <location>
        <position position="56"/>
    </location>
    <ligand>
        <name>FAD</name>
        <dbReference type="ChEBI" id="CHEBI:57692"/>
    </ligand>
</feature>
<feature type="binding site" evidence="1">
    <location>
        <position position="61"/>
    </location>
    <ligand>
        <name>FAD</name>
        <dbReference type="ChEBI" id="CHEBI:57692"/>
    </ligand>
</feature>
<feature type="binding site" evidence="1">
    <location>
        <position position="101"/>
    </location>
    <ligand>
        <name>FAD</name>
        <dbReference type="ChEBI" id="CHEBI:57692"/>
    </ligand>
</feature>
<feature type="binding site" evidence="1">
    <location>
        <position position="139"/>
    </location>
    <ligand>
        <name>FAD</name>
        <dbReference type="ChEBI" id="CHEBI:57692"/>
    </ligand>
</feature>
<feature type="binding site" evidence="1">
    <location>
        <position position="304"/>
    </location>
    <ligand>
        <name>FAD</name>
        <dbReference type="ChEBI" id="CHEBI:57692"/>
    </ligand>
</feature>
<feature type="binding site" evidence="1">
    <location>
        <position position="345"/>
    </location>
    <ligand>
        <name>FAD</name>
        <dbReference type="ChEBI" id="CHEBI:57692"/>
    </ligand>
</feature>
<accession>Q8Y0A5</accession>
<gene>
    <name type="ordered locus">RSc1139</name>
</gene>
<name>FENR_RALN1</name>
<evidence type="ECO:0000255" key="1">
    <source>
        <dbReference type="HAMAP-Rule" id="MF_01685"/>
    </source>
</evidence>
<evidence type="ECO:0000256" key="2">
    <source>
        <dbReference type="SAM" id="MobiDB-lite"/>
    </source>
</evidence>
<evidence type="ECO:0000305" key="3"/>
<reference key="1">
    <citation type="journal article" date="2002" name="Nature">
        <title>Genome sequence of the plant pathogen Ralstonia solanacearum.</title>
        <authorList>
            <person name="Salanoubat M."/>
            <person name="Genin S."/>
            <person name="Artiguenave F."/>
            <person name="Gouzy J."/>
            <person name="Mangenot S."/>
            <person name="Arlat M."/>
            <person name="Billault A."/>
            <person name="Brottier P."/>
            <person name="Camus J.-C."/>
            <person name="Cattolico L."/>
            <person name="Chandler M."/>
            <person name="Choisne N."/>
            <person name="Claudel-Renard C."/>
            <person name="Cunnac S."/>
            <person name="Demange N."/>
            <person name="Gaspin C."/>
            <person name="Lavie M."/>
            <person name="Moisan A."/>
            <person name="Robert C."/>
            <person name="Saurin W."/>
            <person name="Schiex T."/>
            <person name="Siguier P."/>
            <person name="Thebault P."/>
            <person name="Whalen M."/>
            <person name="Wincker P."/>
            <person name="Levy M."/>
            <person name="Weissenbach J."/>
            <person name="Boucher C.A."/>
        </authorList>
    </citation>
    <scope>NUCLEOTIDE SEQUENCE [LARGE SCALE GENOMIC DNA]</scope>
    <source>
        <strain>ATCC BAA-1114 / GMI1000</strain>
    </source>
</reference>
<sequence length="359" mass="38232">MTAETAFSAAPLPPVEQRIDVLIVGAGPVGLFAAFEAGVLGLSCVLVDVLDRPGGQCTELYPEKPIYDIPALVSCTAQELVDRLLAQCAPFGYPILCGRRAETVETIEGEHGRRFRVTTSVGDVFDCAAVLITAGNGAFAPQRVALPEAAALEGRHLHYAVRDTARFAGKHVVVAGGGDSALDWALALRKTAARVTLVHRREGFRAADASVAGMRAAVAAGEMDFQVGMIGRLDSAPDGTLTGIALRQREGETRLPCDELIALYGLVSEPGPIASWDVEMRAGRIVVETTAYETSRAGVFAAGDIALYPNKQKLILSGFHEVAMALRRAYRYANPDKTLVHTHTSNDTNLQSRLHAAAE</sequence>
<keyword id="KW-0274">FAD</keyword>
<keyword id="KW-0285">Flavoprotein</keyword>
<keyword id="KW-0521">NADP</keyword>
<keyword id="KW-0560">Oxidoreductase</keyword>
<keyword id="KW-1185">Reference proteome</keyword>